<keyword id="KW-0150">Chloroplast</keyword>
<keyword id="KW-0456">Lyase</keyword>
<keyword id="KW-0460">Magnesium</keyword>
<keyword id="KW-0479">Metal-binding</keyword>
<keyword id="KW-0934">Plastid</keyword>
<keyword id="KW-0809">Transit peptide</keyword>
<evidence type="ECO:0000250" key="1">
    <source>
        <dbReference type="UniProtKB" id="A0A1C9J6A7"/>
    </source>
</evidence>
<evidence type="ECO:0000250" key="2">
    <source>
        <dbReference type="UniProtKB" id="Q40577"/>
    </source>
</evidence>
<evidence type="ECO:0000250" key="3">
    <source>
        <dbReference type="UniProtKB" id="R9QMW8"/>
    </source>
</evidence>
<evidence type="ECO:0000255" key="4"/>
<evidence type="ECO:0000269" key="5">
    <source>
    </source>
</evidence>
<evidence type="ECO:0000303" key="6">
    <source>
    </source>
</evidence>
<evidence type="ECO:0000305" key="7"/>
<name>MTPS1_PINCO</name>
<organism>
    <name type="scientific">Pinus contorta</name>
    <name type="common">Shore pine</name>
    <name type="synonym">Lodgepole pine</name>
    <dbReference type="NCBI Taxonomy" id="3339"/>
    <lineage>
        <taxon>Eukaryota</taxon>
        <taxon>Viridiplantae</taxon>
        <taxon>Streptophyta</taxon>
        <taxon>Embryophyta</taxon>
        <taxon>Tracheophyta</taxon>
        <taxon>Spermatophyta</taxon>
        <taxon>Pinopsida</taxon>
        <taxon>Pinidae</taxon>
        <taxon>Conifers I</taxon>
        <taxon>Pinales</taxon>
        <taxon>Pinaceae</taxon>
        <taxon>Pinus</taxon>
        <taxon>Pinus subgen. Pinus</taxon>
    </lineage>
</organism>
<protein>
    <recommendedName>
        <fullName evidence="6">Monoterpene synthase like 1, chloroplastic</fullName>
        <shortName evidence="6">PcTPS-mono1</shortName>
        <ecNumber evidence="3">4.2.3.-</ecNumber>
    </recommendedName>
</protein>
<reference key="1">
    <citation type="journal article" date="2013" name="BMC Plant Biol.">
        <title>Transcriptome resources and functional characterization of monoterpene synthases for two host species of the mountain pine beetle, lodgepole pine (Pinus contorta) and jack pine (Pinus banksiana).</title>
        <authorList>
            <person name="Hall D.E."/>
            <person name="Yuen M.M.S."/>
            <person name="Jancsik S."/>
            <person name="Quesada A.L."/>
            <person name="Dullat H.K."/>
            <person name="Li M."/>
            <person name="Henderson H."/>
            <person name="Arango-Velez A."/>
            <person name="Liao N.Y."/>
            <person name="Docking R.T."/>
            <person name="Chan S.K."/>
            <person name="Cooke J.E.K."/>
            <person name="Breuil C."/>
            <person name="Jones S.J.M."/>
            <person name="Keeling C.I."/>
            <person name="Bohlmann J."/>
        </authorList>
    </citation>
    <scope>NUCLEOTIDE SEQUENCE [MRNA]</scope>
    <scope>FUNCTION</scope>
    <scope>CATALYTIC ACTIVITY</scope>
    <scope>PATHWAY</scope>
</reference>
<accession>R9QMY7</accession>
<proteinExistence type="evidence at protein level"/>
<feature type="transit peptide" description="Chloroplast" evidence="4">
    <location>
        <begin position="1"/>
        <end position="50"/>
    </location>
</feature>
<feature type="chain" id="PRO_0000455030" description="Monoterpene synthase like 1, chloroplastic">
    <location>
        <begin position="51"/>
        <end position="627"/>
    </location>
</feature>
<feature type="short sequence motif" description="DDXXD motif" evidence="7">
    <location>
        <begin position="378"/>
        <end position="382"/>
    </location>
</feature>
<feature type="binding site" evidence="2">
    <location>
        <position position="378"/>
    </location>
    <ligand>
        <name>Mg(2+)</name>
        <dbReference type="ChEBI" id="CHEBI:18420"/>
        <label>1</label>
    </ligand>
</feature>
<feature type="binding site" evidence="2">
    <location>
        <position position="378"/>
    </location>
    <ligand>
        <name>Mg(2+)</name>
        <dbReference type="ChEBI" id="CHEBI:18420"/>
        <label>2</label>
    </ligand>
</feature>
<feature type="binding site" evidence="2">
    <location>
        <position position="382"/>
    </location>
    <ligand>
        <name>Mg(2+)</name>
        <dbReference type="ChEBI" id="CHEBI:18420"/>
        <label>1</label>
    </ligand>
</feature>
<feature type="binding site" evidence="2">
    <location>
        <position position="382"/>
    </location>
    <ligand>
        <name>Mg(2+)</name>
        <dbReference type="ChEBI" id="CHEBI:18420"/>
        <label>2</label>
    </ligand>
</feature>
<feature type="binding site" evidence="2">
    <location>
        <position position="530"/>
    </location>
    <ligand>
        <name>Mg(2+)</name>
        <dbReference type="ChEBI" id="CHEBI:18420"/>
        <label>3</label>
    </ligand>
</feature>
<sequence>MDLISVLPSTSKSCVCMHKPLSSSTHKLKPFCRTIRILGMPRPRKSVLMASSMSMSVNTLVSDDDIQRRTGGYHSNLWNDDVIQFLSTPYGELAYRERGERLIDEVRDIFSSMSLEDGEFSDLIQRLWMVDNVERLGIDRHFKNEIKSALDYVYSYWSEKGIGCGTKSIITNLNSTALGFRTLPLHGYPVSADVLKHFRNQIGQFVSCPSETEEDIRSMVNLYRASLIAFPGEEVMEEAESFSEKYLKETLQKIPDCSLSREIGDVLEHGWHTNLPRFEARNYIDVFGQDTKNMESNRKTEKLLELAKLEFNIFQSIQKTELESLLRWWNDSGSPQITFTRHRHVEYYTLASCIAFEPQHSGFRLGFAKACHIITVLDDMYDLFGTVEELKLFTAAIKRWDPSATDCLPQYMKGIYMMVYNTVNEMSAEAQKAQGRDTLNYARQAWEVYLDSYMQEAKWIATGYLPTFEEYLENGKVSSGHRVSALQPMLTMDIPFPPHILKEVDFPSNLNDLACAILRLRGDTRCYQEDRARGEETSCISCYMIDNPGATEEDALNHLNVMISGVIKELNWELLKPDSSVPISSKKINFDITRAFHYGYKYRDGYSVSSVETKSLVMRTLLEPVPL</sequence>
<comment type="function">
    <text evidence="3">Monoterpene synthase (TPS) involved in the biosynthesis of monoterpene natural products included in conifer oleoresin secretions and volatile emissions; these compounds contribute to biotic and abiotic stress defense against herbivores and pathogens.</text>
</comment>
<comment type="cofactor">
    <cofactor evidence="1">
        <name>Mg(2+)</name>
        <dbReference type="ChEBI" id="CHEBI:18420"/>
    </cofactor>
    <cofactor evidence="1">
        <name>Mn(2+)</name>
        <dbReference type="ChEBI" id="CHEBI:29035"/>
    </cofactor>
    <text evidence="1">Binds 3 Mg(2+) or Mn(2+) ions per subunit.</text>
</comment>
<comment type="pathway">
    <text evidence="5">Terpene metabolism; oleoresin biosynthesis.</text>
</comment>
<comment type="pathway">
    <text evidence="5">Secondary metabolite biosynthesis; terpenoid biosynthesis.</text>
</comment>
<comment type="subcellular location">
    <subcellularLocation>
        <location evidence="4">Plastid</location>
        <location evidence="4">Chloroplast</location>
    </subcellularLocation>
</comment>
<comment type="domain">
    <text evidence="7">The Asp-Asp-Xaa-Xaa-Asp/Glu (DDXXD/E) motif is important for the catalytic activity, presumably through binding to Mg(2+).</text>
</comment>
<comment type="similarity">
    <text evidence="7">Belongs to the terpene synthase family. Tpsd subfamily.</text>
</comment>
<dbReference type="EC" id="4.2.3.-" evidence="3"/>
<dbReference type="EMBL" id="JQ240294">
    <property type="protein sequence ID" value="AFU73846.1"/>
    <property type="molecule type" value="mRNA"/>
</dbReference>
<dbReference type="SMR" id="R9QMY7"/>
<dbReference type="UniPathway" id="UPA00213"/>
<dbReference type="UniPathway" id="UPA00924"/>
<dbReference type="GO" id="GO:0009507">
    <property type="term" value="C:chloroplast"/>
    <property type="evidence" value="ECO:0007669"/>
    <property type="project" value="UniProtKB-SubCell"/>
</dbReference>
<dbReference type="GO" id="GO:0000287">
    <property type="term" value="F:magnesium ion binding"/>
    <property type="evidence" value="ECO:0007669"/>
    <property type="project" value="InterPro"/>
</dbReference>
<dbReference type="GO" id="GO:0010333">
    <property type="term" value="F:terpene synthase activity"/>
    <property type="evidence" value="ECO:0000314"/>
    <property type="project" value="UniProtKB"/>
</dbReference>
<dbReference type="GO" id="GO:0016102">
    <property type="term" value="P:diterpenoid biosynthetic process"/>
    <property type="evidence" value="ECO:0007669"/>
    <property type="project" value="InterPro"/>
</dbReference>
<dbReference type="GO" id="GO:0010597">
    <property type="term" value="P:green leaf volatile biosynthetic process"/>
    <property type="evidence" value="ECO:0000314"/>
    <property type="project" value="UniProtKB"/>
</dbReference>
<dbReference type="GO" id="GO:0016114">
    <property type="term" value="P:terpenoid biosynthetic process"/>
    <property type="evidence" value="ECO:0000314"/>
    <property type="project" value="UniProtKB"/>
</dbReference>
<dbReference type="CDD" id="cd00684">
    <property type="entry name" value="Terpene_cyclase_plant_C1"/>
    <property type="match status" value="1"/>
</dbReference>
<dbReference type="FunFam" id="1.50.10.130:FF:000004">
    <property type="entry name" value="Carene synthase, chloroplastic"/>
    <property type="match status" value="1"/>
</dbReference>
<dbReference type="FunFam" id="1.10.600.10:FF:000005">
    <property type="entry name" value="Ent-kaur-16-ene synthase, chloroplastic"/>
    <property type="match status" value="1"/>
</dbReference>
<dbReference type="Gene3D" id="1.10.600.10">
    <property type="entry name" value="Farnesyl Diphosphate Synthase"/>
    <property type="match status" value="1"/>
</dbReference>
<dbReference type="Gene3D" id="1.50.10.130">
    <property type="entry name" value="Terpene synthase, N-terminal domain"/>
    <property type="match status" value="1"/>
</dbReference>
<dbReference type="InterPro" id="IPR008949">
    <property type="entry name" value="Isoprenoid_synthase_dom_sf"/>
</dbReference>
<dbReference type="InterPro" id="IPR034741">
    <property type="entry name" value="Terpene_cyclase-like_1_C"/>
</dbReference>
<dbReference type="InterPro" id="IPR044814">
    <property type="entry name" value="Terpene_cyclase_plant_C1"/>
</dbReference>
<dbReference type="InterPro" id="IPR001906">
    <property type="entry name" value="Terpene_synth_N"/>
</dbReference>
<dbReference type="InterPro" id="IPR036965">
    <property type="entry name" value="Terpene_synth_N_sf"/>
</dbReference>
<dbReference type="InterPro" id="IPR050148">
    <property type="entry name" value="Terpene_synthase-like"/>
</dbReference>
<dbReference type="InterPro" id="IPR005630">
    <property type="entry name" value="Terpene_synthase_metal-bd"/>
</dbReference>
<dbReference type="InterPro" id="IPR008930">
    <property type="entry name" value="Terpenoid_cyclase/PrenylTrfase"/>
</dbReference>
<dbReference type="PANTHER" id="PTHR31225">
    <property type="entry name" value="OS04G0344100 PROTEIN-RELATED"/>
    <property type="match status" value="1"/>
</dbReference>
<dbReference type="PANTHER" id="PTHR31225:SF98">
    <property type="entry name" value="TERPENE SYNTHASE 9-RELATED"/>
    <property type="match status" value="1"/>
</dbReference>
<dbReference type="Pfam" id="PF01397">
    <property type="entry name" value="Terpene_synth"/>
    <property type="match status" value="1"/>
</dbReference>
<dbReference type="Pfam" id="PF03936">
    <property type="entry name" value="Terpene_synth_C"/>
    <property type="match status" value="1"/>
</dbReference>
<dbReference type="SFLD" id="SFLDS00005">
    <property type="entry name" value="Isoprenoid_Synthase_Type_I"/>
    <property type="match status" value="1"/>
</dbReference>
<dbReference type="SFLD" id="SFLDG01019">
    <property type="entry name" value="Terpene_Cyclase_Like_1_C_Termi"/>
    <property type="match status" value="1"/>
</dbReference>
<dbReference type="SFLD" id="SFLDG01014">
    <property type="entry name" value="Terpene_Cyclase_Like_1_N-term"/>
    <property type="match status" value="1"/>
</dbReference>
<dbReference type="SUPFAM" id="SSF48239">
    <property type="entry name" value="Terpenoid cyclases/Protein prenyltransferases"/>
    <property type="match status" value="1"/>
</dbReference>
<dbReference type="SUPFAM" id="SSF48576">
    <property type="entry name" value="Terpenoid synthases"/>
    <property type="match status" value="1"/>
</dbReference>
<gene>
    <name evidence="6" type="primary">TPS-mono1</name>
</gene>